<sequence>MVAPQRRTVMPALGLLASSLCSLLLTANAATVEQHWNINWVPDVNPDGLYPRHVIGVNGSWPPPIINVNASDTVRITATNKLETGVGASLHSHGMFFNRTGYYDGAVAITQCPIPPGQSFTYETLNSPASPADRRKQMGTFWIHAHNNDQYTDGLRSPVIIHPDDPADIHYNYDDDYTVILGDWYHSNYTDLVKNEFMNRKNPTGAEPVPKSGLIYFAHTSNKTSAATYLPGFSENATLPFEAGKTYRLRVINMSALAAFYFYLSGHDMQVIEVEGVDVLPQPVDFLSVAVAQRFSVLVTARNDTDPQNWKLHANMDEDMFDVVPEDLQLNVSATISYPNAPKDKFGPEKILEEYTYFDDLQFVPVNAEPMVTPDAVHRLDVSFDTMSDGENYAAFNNISYVAPQVPALFSAESMGALASNPAIYGPNSNAFVIKHNEMIEVQLFNWDAGKHPFHLHGHHFQVVHKSQDVTSDDPTINPPFNSSQVNPMRRDTVMVPPGGSAYLRFRADNPGAWFFHCHIDPHLVSGLASIFIEAPDVLSDSFLNVPSYIKNQCQAQGIATTGNAVGLNSTSDFDGLAKGPTYLESGWTGRAIAAFTGCIITGLLGLATVVVYGWHSGEEDDDEEEEDK</sequence>
<proteinExistence type="evidence at transcript level"/>
<comment type="function">
    <text evidence="4">Iron transport multicopper oxidase, which is required for Fe(2+) high affinity uptake (PubMed:17138696). May be required to oxidize Fe(2+) and release it from the transporter (PubMed:17138696). Essential component of copper-dependent iron transport (PubMed:17138696).</text>
</comment>
<comment type="cofactor">
    <cofactor evidence="1">
        <name>Cu cation</name>
        <dbReference type="ChEBI" id="CHEBI:23378"/>
    </cofactor>
    <text evidence="1">Binds 4 Cu cations per monomer.</text>
</comment>
<comment type="subcellular location">
    <subcellularLocation>
        <location evidence="6">Cell membrane</location>
        <topology evidence="2">Single-pass type I membrane protein</topology>
    </subcellularLocation>
</comment>
<comment type="induction">
    <text evidence="4">Expression regulated by iron through the urbs1 transcription factor (PubMed:17138696).</text>
</comment>
<comment type="disruption phenotype">
    <text evidence="4">Strongly reduces virulence (PubMed:17138696).</text>
</comment>
<comment type="similarity">
    <text evidence="6">Belongs to the multicopper oxidase family.</text>
</comment>
<feature type="signal peptide" evidence="2">
    <location>
        <begin position="1"/>
        <end position="29"/>
    </location>
</feature>
<feature type="chain" id="PRO_5010843702" description="Iron multicopper oxidase fer1">
    <location>
        <begin position="30"/>
        <end position="629"/>
    </location>
</feature>
<feature type="transmembrane region" description="Helical" evidence="2">
    <location>
        <begin position="592"/>
        <end position="612"/>
    </location>
</feature>
<feature type="domain" description="Plastocyanin-like 1" evidence="2">
    <location>
        <begin position="44"/>
        <end position="164"/>
    </location>
</feature>
<feature type="domain" description="Plastocyanin-like 2" evidence="2">
    <location>
        <begin position="175"/>
        <end position="338"/>
    </location>
</feature>
<feature type="domain" description="Plastocyanin-like 3" evidence="2">
    <location>
        <begin position="401"/>
        <end position="537"/>
    </location>
</feature>
<feature type="binding site" evidence="1">
    <location>
        <position position="91"/>
    </location>
    <ligand>
        <name>Cu cation</name>
        <dbReference type="ChEBI" id="CHEBI:23378"/>
        <label>1</label>
    </ligand>
</feature>
<feature type="binding site" evidence="1">
    <location>
        <position position="93"/>
    </location>
    <ligand>
        <name>Cu cation</name>
        <dbReference type="ChEBI" id="CHEBI:23378"/>
        <label>2</label>
    </ligand>
</feature>
<feature type="binding site" evidence="1">
    <location>
        <position position="144"/>
    </location>
    <ligand>
        <name>Cu cation</name>
        <dbReference type="ChEBI" id="CHEBI:23378"/>
        <label>2</label>
    </ligand>
</feature>
<feature type="binding site" evidence="1">
    <location>
        <position position="146"/>
    </location>
    <ligand>
        <name>Cu cation</name>
        <dbReference type="ChEBI" id="CHEBI:23378"/>
        <label>3</label>
    </ligand>
</feature>
<feature type="binding site" evidence="1">
    <location>
        <position position="452"/>
    </location>
    <ligand>
        <name>Cu cation</name>
        <dbReference type="ChEBI" id="CHEBI:23378"/>
        <label>4</label>
    </ligand>
</feature>
<feature type="binding site" evidence="1">
    <location>
        <position position="455"/>
    </location>
    <ligand>
        <name>Cu cation</name>
        <dbReference type="ChEBI" id="CHEBI:23378"/>
        <label>1</label>
    </ligand>
</feature>
<feature type="binding site" evidence="1">
    <location>
        <position position="457"/>
    </location>
    <ligand>
        <name>Cu cation</name>
        <dbReference type="ChEBI" id="CHEBI:23378"/>
        <label>3</label>
    </ligand>
</feature>
<feature type="binding site" evidence="1">
    <location>
        <position position="517"/>
    </location>
    <ligand>
        <name>Cu cation</name>
        <dbReference type="ChEBI" id="CHEBI:23378"/>
        <label>3</label>
    </ligand>
</feature>
<feature type="binding site" evidence="1">
    <location>
        <position position="518"/>
    </location>
    <ligand>
        <name>Cu cation</name>
        <dbReference type="ChEBI" id="CHEBI:23378"/>
        <label>4</label>
    </ligand>
</feature>
<feature type="binding site" evidence="1">
    <location>
        <position position="519"/>
    </location>
    <ligand>
        <name>Cu cation</name>
        <dbReference type="ChEBI" id="CHEBI:23378"/>
        <label>2</label>
    </ligand>
</feature>
<feature type="binding site" evidence="1">
    <location>
        <position position="523"/>
    </location>
    <ligand>
        <name>Cu cation</name>
        <dbReference type="ChEBI" id="CHEBI:23378"/>
        <label>4</label>
    </ligand>
</feature>
<feature type="glycosylation site" description="N-linked (GlcNAc...) asparagine" evidence="3">
    <location>
        <position position="58"/>
    </location>
</feature>
<feature type="glycosylation site" description="N-linked (GlcNAc...) asparagine" evidence="3">
    <location>
        <position position="69"/>
    </location>
</feature>
<feature type="glycosylation site" description="N-linked (GlcNAc...) asparagine" evidence="3">
    <location>
        <position position="98"/>
    </location>
</feature>
<feature type="glycosylation site" description="N-linked (GlcNAc...) asparagine" evidence="3">
    <location>
        <position position="188"/>
    </location>
</feature>
<feature type="glycosylation site" description="N-linked (GlcNAc...) asparagine" evidence="3">
    <location>
        <position position="222"/>
    </location>
</feature>
<feature type="glycosylation site" description="N-linked (GlcNAc...) asparagine" evidence="3">
    <location>
        <position position="236"/>
    </location>
</feature>
<feature type="glycosylation site" description="N-linked (GlcNAc...) asparagine" evidence="3">
    <location>
        <position position="253"/>
    </location>
</feature>
<feature type="glycosylation site" description="N-linked (GlcNAc...) asparagine" evidence="3">
    <location>
        <position position="303"/>
    </location>
</feature>
<feature type="glycosylation site" description="N-linked (GlcNAc...) asparagine" evidence="3">
    <location>
        <position position="331"/>
    </location>
</feature>
<feature type="glycosylation site" description="N-linked (GlcNAc...) asparagine" evidence="3">
    <location>
        <position position="398"/>
    </location>
</feature>
<feature type="glycosylation site" description="N-linked (GlcNAc...) asparagine" evidence="3">
    <location>
        <position position="482"/>
    </location>
</feature>
<feature type="glycosylation site" description="N-linked (GlcNAc...) asparagine" evidence="3">
    <location>
        <position position="569"/>
    </location>
</feature>
<reference key="1">
    <citation type="journal article" date="2006" name="Nature">
        <title>Insights from the genome of the biotrophic fungal plant pathogen Ustilago maydis.</title>
        <authorList>
            <person name="Kaemper J."/>
            <person name="Kahmann R."/>
            <person name="Boelker M."/>
            <person name="Ma L.-J."/>
            <person name="Brefort T."/>
            <person name="Saville B.J."/>
            <person name="Banuett F."/>
            <person name="Kronstad J.W."/>
            <person name="Gold S.E."/>
            <person name="Mueller O."/>
            <person name="Perlin M.H."/>
            <person name="Woesten H.A.B."/>
            <person name="de Vries R."/>
            <person name="Ruiz-Herrera J."/>
            <person name="Reynaga-Pena C.G."/>
            <person name="Snetselaar K."/>
            <person name="McCann M."/>
            <person name="Perez-Martin J."/>
            <person name="Feldbruegge M."/>
            <person name="Basse C.W."/>
            <person name="Steinberg G."/>
            <person name="Ibeas J.I."/>
            <person name="Holloman W."/>
            <person name="Guzman P."/>
            <person name="Farman M.L."/>
            <person name="Stajich J.E."/>
            <person name="Sentandreu R."/>
            <person name="Gonzalez-Prieto J.M."/>
            <person name="Kennell J.C."/>
            <person name="Molina L."/>
            <person name="Schirawski J."/>
            <person name="Mendoza-Mendoza A."/>
            <person name="Greilinger D."/>
            <person name="Muench K."/>
            <person name="Roessel N."/>
            <person name="Scherer M."/>
            <person name="Vranes M."/>
            <person name="Ladendorf O."/>
            <person name="Vincon V."/>
            <person name="Fuchs U."/>
            <person name="Sandrock B."/>
            <person name="Meng S."/>
            <person name="Ho E.C.H."/>
            <person name="Cahill M.J."/>
            <person name="Boyce K.J."/>
            <person name="Klose J."/>
            <person name="Klosterman S.J."/>
            <person name="Deelstra H.J."/>
            <person name="Ortiz-Castellanos L."/>
            <person name="Li W."/>
            <person name="Sanchez-Alonso P."/>
            <person name="Schreier P.H."/>
            <person name="Haeuser-Hahn I."/>
            <person name="Vaupel M."/>
            <person name="Koopmann E."/>
            <person name="Friedrich G."/>
            <person name="Voss H."/>
            <person name="Schlueter T."/>
            <person name="Margolis J."/>
            <person name="Platt D."/>
            <person name="Swimmer C."/>
            <person name="Gnirke A."/>
            <person name="Chen F."/>
            <person name="Vysotskaia V."/>
            <person name="Mannhaupt G."/>
            <person name="Gueldener U."/>
            <person name="Muensterkoetter M."/>
            <person name="Haase D."/>
            <person name="Oesterheld M."/>
            <person name="Mewes H.-W."/>
            <person name="Mauceli E.W."/>
            <person name="DeCaprio D."/>
            <person name="Wade C.M."/>
            <person name="Butler J."/>
            <person name="Young S.K."/>
            <person name="Jaffe D.B."/>
            <person name="Calvo S.E."/>
            <person name="Nusbaum C."/>
            <person name="Galagan J.E."/>
            <person name="Birren B.W."/>
        </authorList>
    </citation>
    <scope>NUCLEOTIDE SEQUENCE [LARGE SCALE GENOMIC DNA]</scope>
    <source>
        <strain>DSM 14603 / FGSC 9021 / UM521</strain>
    </source>
</reference>
<reference key="2">
    <citation type="submission" date="2014-09" db="EMBL/GenBank/DDBJ databases">
        <authorList>
            <person name="Gueldener U."/>
            <person name="Muensterkoetter M."/>
            <person name="Walter M.C."/>
            <person name="Mannhaupt G."/>
            <person name="Kahmann R."/>
        </authorList>
    </citation>
    <scope>GENOME REANNOTATION</scope>
    <source>
        <strain>DSM 14603 / FGSC 9021 / UM521</strain>
    </source>
</reference>
<reference key="3">
    <citation type="journal article" date="2006" name="Plant Cell">
        <title>A ferroxidation/permeation iron uptake system is required for virulence in Ustilago maydis.</title>
        <authorList>
            <person name="Eichhorn H."/>
            <person name="Lessing F."/>
            <person name="Winterberg B."/>
            <person name="Schirawski J."/>
            <person name="Kamper J."/>
            <person name="Muller P."/>
            <person name="Kahmann R."/>
        </authorList>
    </citation>
    <scope>INDUCTION</scope>
    <scope>FUNCTION</scope>
    <scope>DISRUPTION PHENOTYPE</scope>
    <source>
        <strain>DSM 14603 / FGSC 9021 / UM521</strain>
    </source>
</reference>
<gene>
    <name evidence="5" type="primary">fer1</name>
    <name type="ORF">UMAG_00105</name>
</gene>
<keyword id="KW-1003">Cell membrane</keyword>
<keyword id="KW-0186">Copper</keyword>
<keyword id="KW-0325">Glycoprotein</keyword>
<keyword id="KW-0472">Membrane</keyword>
<keyword id="KW-0479">Metal-binding</keyword>
<keyword id="KW-0560">Oxidoreductase</keyword>
<keyword id="KW-1185">Reference proteome</keyword>
<keyword id="KW-0677">Repeat</keyword>
<keyword id="KW-0732">Signal</keyword>
<keyword id="KW-0812">Transmembrane</keyword>
<keyword id="KW-1133">Transmembrane helix</keyword>
<keyword id="KW-0843">Virulence</keyword>
<evidence type="ECO:0000250" key="1">
    <source>
        <dbReference type="UniProtKB" id="Q70KY3"/>
    </source>
</evidence>
<evidence type="ECO:0000255" key="2"/>
<evidence type="ECO:0000255" key="3">
    <source>
        <dbReference type="PROSITE-ProRule" id="PRU00498"/>
    </source>
</evidence>
<evidence type="ECO:0000269" key="4">
    <source>
    </source>
</evidence>
<evidence type="ECO:0000303" key="5">
    <source>
    </source>
</evidence>
<evidence type="ECO:0000305" key="6"/>
<evidence type="ECO:0000305" key="7">
    <source>
    </source>
</evidence>
<protein>
    <recommendedName>
        <fullName evidence="5">Iron multicopper oxidase fer1</fullName>
        <ecNumber evidence="7">1.-.-.-</ecNumber>
    </recommendedName>
    <alternativeName>
        <fullName evidence="5">Fe-regulated protein 1</fullName>
    </alternativeName>
</protein>
<accession>Q4PIF8</accession>
<accession>A1A651</accession>
<name>FER1_MYCMD</name>
<organism>
    <name type="scientific">Mycosarcoma maydis</name>
    <name type="common">Corn smut fungus</name>
    <name type="synonym">Ustilago maydis</name>
    <dbReference type="NCBI Taxonomy" id="5270"/>
    <lineage>
        <taxon>Eukaryota</taxon>
        <taxon>Fungi</taxon>
        <taxon>Dikarya</taxon>
        <taxon>Basidiomycota</taxon>
        <taxon>Ustilaginomycotina</taxon>
        <taxon>Ustilaginomycetes</taxon>
        <taxon>Ustilaginales</taxon>
        <taxon>Ustilaginaceae</taxon>
        <taxon>Mycosarcoma</taxon>
    </lineage>
</organism>
<dbReference type="EC" id="1.-.-.-" evidence="7"/>
<dbReference type="EMBL" id="CM003140">
    <property type="protein sequence ID" value="KIS71664.1"/>
    <property type="molecule type" value="Genomic_DNA"/>
</dbReference>
<dbReference type="EMBL" id="BK004082">
    <property type="protein sequence ID" value="DAA04932.1"/>
    <property type="molecule type" value="Genomic_DNA"/>
</dbReference>
<dbReference type="RefSeq" id="XP_011386068.1">
    <property type="nucleotide sequence ID" value="XM_011387766.1"/>
</dbReference>
<dbReference type="SMR" id="Q4PIF8"/>
<dbReference type="FunCoup" id="Q4PIF8">
    <property type="interactions" value="37"/>
</dbReference>
<dbReference type="STRING" id="237631.Q4PIF8"/>
<dbReference type="GlyCosmos" id="Q4PIF8">
    <property type="glycosylation" value="12 sites, No reported glycans"/>
</dbReference>
<dbReference type="EnsemblFungi" id="KIS71664">
    <property type="protein sequence ID" value="KIS71664"/>
    <property type="gene ID" value="UMAG_00105"/>
</dbReference>
<dbReference type="GeneID" id="23561502"/>
<dbReference type="KEGG" id="uma:UMAG_00105"/>
<dbReference type="VEuPathDB" id="FungiDB:UMAG_00105"/>
<dbReference type="eggNOG" id="KOG1263">
    <property type="taxonomic scope" value="Eukaryota"/>
</dbReference>
<dbReference type="HOGENOM" id="CLU_006504_7_3_1"/>
<dbReference type="InParanoid" id="Q4PIF8"/>
<dbReference type="OMA" id="WHSHTEH"/>
<dbReference type="OrthoDB" id="2121828at2759"/>
<dbReference type="PHI-base" id="PHI:3919"/>
<dbReference type="Proteomes" id="UP000000561">
    <property type="component" value="Chromosome 1"/>
</dbReference>
<dbReference type="GO" id="GO:0033573">
    <property type="term" value="C:high-affinity iron permease complex"/>
    <property type="evidence" value="ECO:0000318"/>
    <property type="project" value="GO_Central"/>
</dbReference>
<dbReference type="GO" id="GO:0005507">
    <property type="term" value="F:copper ion binding"/>
    <property type="evidence" value="ECO:0007669"/>
    <property type="project" value="InterPro"/>
</dbReference>
<dbReference type="GO" id="GO:0004322">
    <property type="term" value="F:ferroxidase activity"/>
    <property type="evidence" value="ECO:0000318"/>
    <property type="project" value="GO_Central"/>
</dbReference>
<dbReference type="GO" id="GO:0010106">
    <property type="term" value="P:cellular response to iron ion starvation"/>
    <property type="evidence" value="ECO:0000318"/>
    <property type="project" value="GO_Central"/>
</dbReference>
<dbReference type="GO" id="GO:0033215">
    <property type="term" value="P:reductive iron assimilation"/>
    <property type="evidence" value="ECO:0000318"/>
    <property type="project" value="GO_Central"/>
</dbReference>
<dbReference type="CDD" id="cd13851">
    <property type="entry name" value="CuRO_1_Fet3p"/>
    <property type="match status" value="1"/>
</dbReference>
<dbReference type="CDD" id="cd13877">
    <property type="entry name" value="CuRO_2_Fet3p_like"/>
    <property type="match status" value="1"/>
</dbReference>
<dbReference type="CDD" id="cd13899">
    <property type="entry name" value="CuRO_3_Fet3p"/>
    <property type="match status" value="1"/>
</dbReference>
<dbReference type="FunFam" id="2.60.40.420:FF:000024">
    <property type="entry name" value="FET5p Multicopper oxidase"/>
    <property type="match status" value="1"/>
</dbReference>
<dbReference type="FunFam" id="2.60.40.420:FF:000025">
    <property type="entry name" value="FET5p Multicopper oxidase"/>
    <property type="match status" value="1"/>
</dbReference>
<dbReference type="Gene3D" id="2.60.40.420">
    <property type="entry name" value="Cupredoxins - blue copper proteins"/>
    <property type="match status" value="3"/>
</dbReference>
<dbReference type="InterPro" id="IPR011707">
    <property type="entry name" value="Cu-oxidase-like_N"/>
</dbReference>
<dbReference type="InterPro" id="IPR001117">
    <property type="entry name" value="Cu-oxidase_2nd"/>
</dbReference>
<dbReference type="InterPro" id="IPR011706">
    <property type="entry name" value="Cu-oxidase_C"/>
</dbReference>
<dbReference type="InterPro" id="IPR045087">
    <property type="entry name" value="Cu-oxidase_fam"/>
</dbReference>
<dbReference type="InterPro" id="IPR033138">
    <property type="entry name" value="Cu_oxidase_CS"/>
</dbReference>
<dbReference type="InterPro" id="IPR002355">
    <property type="entry name" value="Cu_oxidase_Cu_BS"/>
</dbReference>
<dbReference type="InterPro" id="IPR008972">
    <property type="entry name" value="Cupredoxin"/>
</dbReference>
<dbReference type="InterPro" id="IPR044130">
    <property type="entry name" value="CuRO_2_Fet3-like"/>
</dbReference>
<dbReference type="PANTHER" id="PTHR11709:SF361">
    <property type="entry name" value="IRON TRANSPORT MULTICOPPER OXIDASE FET3"/>
    <property type="match status" value="1"/>
</dbReference>
<dbReference type="PANTHER" id="PTHR11709">
    <property type="entry name" value="MULTI-COPPER OXIDASE"/>
    <property type="match status" value="1"/>
</dbReference>
<dbReference type="Pfam" id="PF00394">
    <property type="entry name" value="Cu-oxidase"/>
    <property type="match status" value="1"/>
</dbReference>
<dbReference type="Pfam" id="PF07731">
    <property type="entry name" value="Cu-oxidase_2"/>
    <property type="match status" value="1"/>
</dbReference>
<dbReference type="Pfam" id="PF07732">
    <property type="entry name" value="Cu-oxidase_3"/>
    <property type="match status" value="1"/>
</dbReference>
<dbReference type="SUPFAM" id="SSF49503">
    <property type="entry name" value="Cupredoxins"/>
    <property type="match status" value="3"/>
</dbReference>
<dbReference type="PROSITE" id="PS00079">
    <property type="entry name" value="MULTICOPPER_OXIDASE1"/>
    <property type="match status" value="1"/>
</dbReference>
<dbReference type="PROSITE" id="PS00080">
    <property type="entry name" value="MULTICOPPER_OXIDASE2"/>
    <property type="match status" value="1"/>
</dbReference>